<reference key="1">
    <citation type="journal article" date="2006" name="J. Virol.">
        <title>Characterization of White bream virus reveals a novel genetic cluster of nidoviruses.</title>
        <authorList>
            <person name="Schuetze H."/>
            <person name="Ulferts R."/>
            <person name="Schelle B."/>
            <person name="Bayer S."/>
            <person name="Granzow H."/>
            <person name="Hoffmann B."/>
            <person name="Mettenleiter T.C."/>
            <person name="Ziebuhr J."/>
        </authorList>
    </citation>
    <scope>NUCLEOTIDE SEQUENCE [GENOMIC RNA]</scope>
</reference>
<organismHost>
    <name type="scientific">Blicca bjoerkna</name>
    <name type="common">white bream</name>
    <dbReference type="NCBI Taxonomy" id="58317"/>
</organismHost>
<comment type="function">
    <text evidence="1">Major structural component of virions that associates with genomic RNA.</text>
</comment>
<comment type="subcellular location">
    <subcellularLocation>
        <location>Virion</location>
    </subcellularLocation>
    <text evidence="1">Located inside the virion, complexed with the viral RNA.</text>
</comment>
<comment type="similarity">
    <text evidence="3">Belongs to the torovirinae nucleoprotein family.</text>
</comment>
<accession>Q008X2</accession>
<dbReference type="EMBL" id="DQ898157">
    <property type="protein sequence ID" value="ABI97397.1"/>
    <property type="molecule type" value="Genomic_RNA"/>
</dbReference>
<dbReference type="RefSeq" id="YP_803217.1">
    <property type="nucleotide sequence ID" value="NC_008516.1"/>
</dbReference>
<dbReference type="GeneID" id="4443111"/>
<dbReference type="KEGG" id="vg:4443111"/>
<dbReference type="Proteomes" id="UP000000680">
    <property type="component" value="Segment"/>
</dbReference>
<dbReference type="GO" id="GO:1990904">
    <property type="term" value="C:ribonucleoprotein complex"/>
    <property type="evidence" value="ECO:0007669"/>
    <property type="project" value="UniProtKB-KW"/>
</dbReference>
<dbReference type="GO" id="GO:0019013">
    <property type="term" value="C:viral nucleocapsid"/>
    <property type="evidence" value="ECO:0007669"/>
    <property type="project" value="UniProtKB-KW"/>
</dbReference>
<dbReference type="GO" id="GO:0003723">
    <property type="term" value="F:RNA binding"/>
    <property type="evidence" value="ECO:0007669"/>
    <property type="project" value="UniProtKB-KW"/>
</dbReference>
<proteinExistence type="inferred from homology"/>
<keyword id="KW-1185">Reference proteome</keyword>
<keyword id="KW-0687">Ribonucleoprotein</keyword>
<keyword id="KW-0694">RNA-binding</keyword>
<keyword id="KW-0543">Viral nucleoprotein</keyword>
<keyword id="KW-0946">Virion</keyword>
<evidence type="ECO:0000250" key="1"/>
<evidence type="ECO:0000256" key="2">
    <source>
        <dbReference type="SAM" id="MobiDB-lite"/>
    </source>
</evidence>
<evidence type="ECO:0000305" key="3"/>
<feature type="chain" id="PRO_0000408880" description="Nucleoprotein">
    <location>
        <begin position="1"/>
        <end position="161"/>
    </location>
</feature>
<feature type="region of interest" description="Disordered" evidence="2">
    <location>
        <begin position="1"/>
        <end position="52"/>
    </location>
</feature>
<feature type="compositionally biased region" description="Low complexity" evidence="2">
    <location>
        <begin position="1"/>
        <end position="16"/>
    </location>
</feature>
<feature type="compositionally biased region" description="Basic residues" evidence="2">
    <location>
        <begin position="17"/>
        <end position="26"/>
    </location>
</feature>
<feature type="compositionally biased region" description="Basic and acidic residues" evidence="2">
    <location>
        <begin position="36"/>
        <end position="45"/>
    </location>
</feature>
<protein>
    <recommendedName>
        <fullName>Nucleoprotein</fullName>
    </recommendedName>
    <alternativeName>
        <fullName>Nucleocapsid protein</fullName>
        <shortName>NC</shortName>
        <shortName>Protein N</shortName>
    </alternativeName>
</protein>
<name>NCAP_WBV24</name>
<gene>
    <name type="primary">N</name>
</gene>
<sequence length="161" mass="17972">MSGMYPQPLMMMPQQQRRPRKPRTKSAPKPPTTSKMSEKTKKEVTKSTMSTEKQIPMPTIPAASKGSLKDLDVRNNLNQQELNGIYYDTVNNLNACHGRMIFQPTGGSLTEGTLTVTIKLRVKSDQCLKMCSAFHKRNTNLETPLSAVDISKESEKSLGKD</sequence>
<organism>
    <name type="scientific">White bream virus (isolate Blicca bjoerkna L./Germany/DF24/00)</name>
    <name type="common">WBV</name>
    <dbReference type="NCBI Taxonomy" id="766180"/>
    <lineage>
        <taxon>Viruses</taxon>
        <taxon>Riboviria</taxon>
        <taxon>Orthornavirae</taxon>
        <taxon>Pisuviricota</taxon>
        <taxon>Pisoniviricetes</taxon>
        <taxon>Nidovirales</taxon>
        <taxon>Tornidovirineae</taxon>
        <taxon>Tobaniviridae</taxon>
        <taxon>Piscanivirinae</taxon>
        <taxon>Bafinivirus</taxon>
        <taxon>Blicbavirus</taxon>
        <taxon>White bream virus</taxon>
    </lineage>
</organism>